<comment type="function">
    <text evidence="1">RNA chaperone that binds small regulatory RNA (sRNAs) and mRNAs to facilitate mRNA translational regulation in response to envelope stress, environmental stress and changes in metabolite concentrations. Also binds with high specificity to tRNAs.</text>
</comment>
<comment type="subunit">
    <text evidence="1">Homohexamer.</text>
</comment>
<comment type="similarity">
    <text evidence="1">Belongs to the Hfq family.</text>
</comment>
<sequence length="77" mass="8513">MAKGQSLQDPFLNALRKEHIPVAIYLVNGIKLQGQIESFDQFVILLKNTVSQMVYKHAISTVVPARAIAAIPHVESD</sequence>
<dbReference type="EMBL" id="CP000510">
    <property type="protein sequence ID" value="ABM04925.1"/>
    <property type="molecule type" value="Genomic_DNA"/>
</dbReference>
<dbReference type="RefSeq" id="WP_011771477.1">
    <property type="nucleotide sequence ID" value="NC_008709.1"/>
</dbReference>
<dbReference type="SMR" id="A1SZL0"/>
<dbReference type="STRING" id="357804.Ping_3238"/>
<dbReference type="KEGG" id="pin:Ping_3238"/>
<dbReference type="eggNOG" id="COG1923">
    <property type="taxonomic scope" value="Bacteria"/>
</dbReference>
<dbReference type="HOGENOM" id="CLU_113688_2_2_6"/>
<dbReference type="OrthoDB" id="9799751at2"/>
<dbReference type="Proteomes" id="UP000000639">
    <property type="component" value="Chromosome"/>
</dbReference>
<dbReference type="GO" id="GO:0005829">
    <property type="term" value="C:cytosol"/>
    <property type="evidence" value="ECO:0007669"/>
    <property type="project" value="TreeGrafter"/>
</dbReference>
<dbReference type="GO" id="GO:0003723">
    <property type="term" value="F:RNA binding"/>
    <property type="evidence" value="ECO:0007669"/>
    <property type="project" value="UniProtKB-UniRule"/>
</dbReference>
<dbReference type="GO" id="GO:0006355">
    <property type="term" value="P:regulation of DNA-templated transcription"/>
    <property type="evidence" value="ECO:0007669"/>
    <property type="project" value="InterPro"/>
</dbReference>
<dbReference type="GO" id="GO:0043487">
    <property type="term" value="P:regulation of RNA stability"/>
    <property type="evidence" value="ECO:0007669"/>
    <property type="project" value="TreeGrafter"/>
</dbReference>
<dbReference type="GO" id="GO:0045974">
    <property type="term" value="P:regulation of translation, ncRNA-mediated"/>
    <property type="evidence" value="ECO:0007669"/>
    <property type="project" value="TreeGrafter"/>
</dbReference>
<dbReference type="CDD" id="cd01716">
    <property type="entry name" value="Hfq"/>
    <property type="match status" value="1"/>
</dbReference>
<dbReference type="FunFam" id="2.30.30.100:FF:000001">
    <property type="entry name" value="RNA-binding protein Hfq"/>
    <property type="match status" value="1"/>
</dbReference>
<dbReference type="Gene3D" id="2.30.30.100">
    <property type="match status" value="1"/>
</dbReference>
<dbReference type="HAMAP" id="MF_00436">
    <property type="entry name" value="Hfq"/>
    <property type="match status" value="1"/>
</dbReference>
<dbReference type="InterPro" id="IPR005001">
    <property type="entry name" value="Hfq"/>
</dbReference>
<dbReference type="InterPro" id="IPR010920">
    <property type="entry name" value="LSM_dom_sf"/>
</dbReference>
<dbReference type="InterPro" id="IPR047575">
    <property type="entry name" value="Sm"/>
</dbReference>
<dbReference type="NCBIfam" id="TIGR02383">
    <property type="entry name" value="Hfq"/>
    <property type="match status" value="1"/>
</dbReference>
<dbReference type="NCBIfam" id="NF001602">
    <property type="entry name" value="PRK00395.1"/>
    <property type="match status" value="1"/>
</dbReference>
<dbReference type="PANTHER" id="PTHR34772">
    <property type="entry name" value="RNA-BINDING PROTEIN HFQ"/>
    <property type="match status" value="1"/>
</dbReference>
<dbReference type="PANTHER" id="PTHR34772:SF1">
    <property type="entry name" value="RNA-BINDING PROTEIN HFQ"/>
    <property type="match status" value="1"/>
</dbReference>
<dbReference type="Pfam" id="PF17209">
    <property type="entry name" value="Hfq"/>
    <property type="match status" value="1"/>
</dbReference>
<dbReference type="SUPFAM" id="SSF50182">
    <property type="entry name" value="Sm-like ribonucleoproteins"/>
    <property type="match status" value="1"/>
</dbReference>
<dbReference type="PROSITE" id="PS52002">
    <property type="entry name" value="SM"/>
    <property type="match status" value="1"/>
</dbReference>
<keyword id="KW-1185">Reference proteome</keyword>
<keyword id="KW-0694">RNA-binding</keyword>
<keyword id="KW-0346">Stress response</keyword>
<evidence type="ECO:0000255" key="1">
    <source>
        <dbReference type="HAMAP-Rule" id="MF_00436"/>
    </source>
</evidence>
<evidence type="ECO:0000255" key="2">
    <source>
        <dbReference type="PROSITE-ProRule" id="PRU01346"/>
    </source>
</evidence>
<feature type="chain" id="PRO_1000025930" description="RNA-binding protein Hfq">
    <location>
        <begin position="1"/>
        <end position="77"/>
    </location>
</feature>
<feature type="domain" description="Sm" evidence="2">
    <location>
        <begin position="9"/>
        <end position="68"/>
    </location>
</feature>
<name>HFQ_PSYIN</name>
<reference key="1">
    <citation type="journal article" date="2008" name="BMC Genomics">
        <title>Genomics of an extreme psychrophile, Psychromonas ingrahamii.</title>
        <authorList>
            <person name="Riley M."/>
            <person name="Staley J.T."/>
            <person name="Danchin A."/>
            <person name="Wang T.Z."/>
            <person name="Brettin T.S."/>
            <person name="Hauser L.J."/>
            <person name="Land M.L."/>
            <person name="Thompson L.S."/>
        </authorList>
    </citation>
    <scope>NUCLEOTIDE SEQUENCE [LARGE SCALE GENOMIC DNA]</scope>
    <source>
        <strain>DSM 17664 / CCUG 51855 / 37</strain>
    </source>
</reference>
<protein>
    <recommendedName>
        <fullName evidence="1">RNA-binding protein Hfq</fullName>
    </recommendedName>
</protein>
<organism>
    <name type="scientific">Psychromonas ingrahamii (strain DSM 17664 / CCUG 51855 / 37)</name>
    <dbReference type="NCBI Taxonomy" id="357804"/>
    <lineage>
        <taxon>Bacteria</taxon>
        <taxon>Pseudomonadati</taxon>
        <taxon>Pseudomonadota</taxon>
        <taxon>Gammaproteobacteria</taxon>
        <taxon>Alteromonadales</taxon>
        <taxon>Psychromonadaceae</taxon>
        <taxon>Psychromonas</taxon>
    </lineage>
</organism>
<accession>A1SZL0</accession>
<proteinExistence type="inferred from homology"/>
<gene>
    <name evidence="1" type="primary">hfq</name>
    <name type="ordered locus">Ping_3238</name>
</gene>